<keyword id="KW-0028">Amino-acid biosynthesis</keyword>
<keyword id="KW-0055">Arginine biosynthesis</keyword>
<keyword id="KW-0963">Cytoplasm</keyword>
<keyword id="KW-0456">Lyase</keyword>
<keyword id="KW-1185">Reference proteome</keyword>
<dbReference type="EC" id="4.3.2.1" evidence="1"/>
<dbReference type="EMBL" id="AE007870">
    <property type="protein sequence ID" value="AAK88796.2"/>
    <property type="status" value="ALT_INIT"/>
    <property type="molecule type" value="Genomic_DNA"/>
</dbReference>
<dbReference type="PIR" id="AG3128">
    <property type="entry name" value="AG3128"/>
</dbReference>
<dbReference type="PIR" id="B98159">
    <property type="entry name" value="B98159"/>
</dbReference>
<dbReference type="RefSeq" id="NP_356011.2">
    <property type="nucleotide sequence ID" value="NC_003063.2"/>
</dbReference>
<dbReference type="RefSeq" id="WP_035257217.1">
    <property type="nucleotide sequence ID" value="NC_003063.2"/>
</dbReference>
<dbReference type="SMR" id="Q8U705"/>
<dbReference type="STRING" id="176299.Atu4651"/>
<dbReference type="EnsemblBacteria" id="AAK88796">
    <property type="protein sequence ID" value="AAK88796"/>
    <property type="gene ID" value="Atu4651"/>
</dbReference>
<dbReference type="GeneID" id="1136525"/>
<dbReference type="KEGG" id="atu:Atu4651"/>
<dbReference type="PATRIC" id="fig|176299.10.peg.4456"/>
<dbReference type="eggNOG" id="COG0165">
    <property type="taxonomic scope" value="Bacteria"/>
</dbReference>
<dbReference type="HOGENOM" id="CLU_027272_3_0_5"/>
<dbReference type="OrthoDB" id="9769623at2"/>
<dbReference type="BioCyc" id="AGRO:ATU4651-MONOMER"/>
<dbReference type="UniPathway" id="UPA00068">
    <property type="reaction ID" value="UER00114"/>
</dbReference>
<dbReference type="Proteomes" id="UP000000813">
    <property type="component" value="Chromosome linear"/>
</dbReference>
<dbReference type="GO" id="GO:0005829">
    <property type="term" value="C:cytosol"/>
    <property type="evidence" value="ECO:0007669"/>
    <property type="project" value="TreeGrafter"/>
</dbReference>
<dbReference type="GO" id="GO:0004056">
    <property type="term" value="F:argininosuccinate lyase activity"/>
    <property type="evidence" value="ECO:0007669"/>
    <property type="project" value="UniProtKB-UniRule"/>
</dbReference>
<dbReference type="GO" id="GO:0042450">
    <property type="term" value="P:arginine biosynthetic process via ornithine"/>
    <property type="evidence" value="ECO:0007669"/>
    <property type="project" value="InterPro"/>
</dbReference>
<dbReference type="GO" id="GO:0006526">
    <property type="term" value="P:L-arginine biosynthetic process"/>
    <property type="evidence" value="ECO:0007669"/>
    <property type="project" value="UniProtKB-UniRule"/>
</dbReference>
<dbReference type="CDD" id="cd01359">
    <property type="entry name" value="Argininosuccinate_lyase"/>
    <property type="match status" value="1"/>
</dbReference>
<dbReference type="Gene3D" id="1.10.40.30">
    <property type="entry name" value="Fumarase/aspartase (C-terminal domain)"/>
    <property type="match status" value="1"/>
</dbReference>
<dbReference type="Gene3D" id="1.20.200.10">
    <property type="entry name" value="Fumarase/aspartase (Central domain)"/>
    <property type="match status" value="1"/>
</dbReference>
<dbReference type="Gene3D" id="1.10.275.10">
    <property type="entry name" value="Fumarase/aspartase (N-terminal domain)"/>
    <property type="match status" value="1"/>
</dbReference>
<dbReference type="HAMAP" id="MF_00006">
    <property type="entry name" value="Arg_succ_lyase"/>
    <property type="match status" value="1"/>
</dbReference>
<dbReference type="InterPro" id="IPR029419">
    <property type="entry name" value="Arg_succ_lyase_C"/>
</dbReference>
<dbReference type="InterPro" id="IPR009049">
    <property type="entry name" value="Argininosuccinate_lyase"/>
</dbReference>
<dbReference type="InterPro" id="IPR024083">
    <property type="entry name" value="Fumarase/histidase_N"/>
</dbReference>
<dbReference type="InterPro" id="IPR000362">
    <property type="entry name" value="Fumarate_lyase_fam"/>
</dbReference>
<dbReference type="InterPro" id="IPR022761">
    <property type="entry name" value="Fumarate_lyase_N"/>
</dbReference>
<dbReference type="InterPro" id="IPR008948">
    <property type="entry name" value="L-Aspartase-like"/>
</dbReference>
<dbReference type="NCBIfam" id="TIGR00838">
    <property type="entry name" value="argH"/>
    <property type="match status" value="1"/>
</dbReference>
<dbReference type="PANTHER" id="PTHR43814">
    <property type="entry name" value="ARGININOSUCCINATE LYASE"/>
    <property type="match status" value="1"/>
</dbReference>
<dbReference type="PANTHER" id="PTHR43814:SF1">
    <property type="entry name" value="ARGININOSUCCINATE LYASE"/>
    <property type="match status" value="1"/>
</dbReference>
<dbReference type="Pfam" id="PF14698">
    <property type="entry name" value="ASL_C2"/>
    <property type="match status" value="1"/>
</dbReference>
<dbReference type="Pfam" id="PF00206">
    <property type="entry name" value="Lyase_1"/>
    <property type="match status" value="1"/>
</dbReference>
<dbReference type="PRINTS" id="PR00145">
    <property type="entry name" value="ARGSUCLYASE"/>
</dbReference>
<dbReference type="PRINTS" id="PR00149">
    <property type="entry name" value="FUMRATELYASE"/>
</dbReference>
<dbReference type="SUPFAM" id="SSF48557">
    <property type="entry name" value="L-aspartase-like"/>
    <property type="match status" value="1"/>
</dbReference>
<proteinExistence type="inferred from homology"/>
<reference key="1">
    <citation type="journal article" date="2001" name="Science">
        <title>The genome of the natural genetic engineer Agrobacterium tumefaciens C58.</title>
        <authorList>
            <person name="Wood D.W."/>
            <person name="Setubal J.C."/>
            <person name="Kaul R."/>
            <person name="Monks D.E."/>
            <person name="Kitajima J.P."/>
            <person name="Okura V.K."/>
            <person name="Zhou Y."/>
            <person name="Chen L."/>
            <person name="Wood G.E."/>
            <person name="Almeida N.F. Jr."/>
            <person name="Woo L."/>
            <person name="Chen Y."/>
            <person name="Paulsen I.T."/>
            <person name="Eisen J.A."/>
            <person name="Karp P.D."/>
            <person name="Bovee D. Sr."/>
            <person name="Chapman P."/>
            <person name="Clendenning J."/>
            <person name="Deatherage G."/>
            <person name="Gillet W."/>
            <person name="Grant C."/>
            <person name="Kutyavin T."/>
            <person name="Levy R."/>
            <person name="Li M.-J."/>
            <person name="McClelland E."/>
            <person name="Palmieri A."/>
            <person name="Raymond C."/>
            <person name="Rouse G."/>
            <person name="Saenphimmachak C."/>
            <person name="Wu Z."/>
            <person name="Romero P."/>
            <person name="Gordon D."/>
            <person name="Zhang S."/>
            <person name="Yoo H."/>
            <person name="Tao Y."/>
            <person name="Biddle P."/>
            <person name="Jung M."/>
            <person name="Krespan W."/>
            <person name="Perry M."/>
            <person name="Gordon-Kamm B."/>
            <person name="Liao L."/>
            <person name="Kim S."/>
            <person name="Hendrick C."/>
            <person name="Zhao Z.-Y."/>
            <person name="Dolan M."/>
            <person name="Chumley F."/>
            <person name="Tingey S.V."/>
            <person name="Tomb J.-F."/>
            <person name="Gordon M.P."/>
            <person name="Olson M.V."/>
            <person name="Nester E.W."/>
        </authorList>
    </citation>
    <scope>NUCLEOTIDE SEQUENCE [LARGE SCALE GENOMIC DNA]</scope>
    <source>
        <strain>C58 / ATCC 33970</strain>
    </source>
</reference>
<reference key="2">
    <citation type="journal article" date="2001" name="Science">
        <title>Genome sequence of the plant pathogen and biotechnology agent Agrobacterium tumefaciens C58.</title>
        <authorList>
            <person name="Goodner B."/>
            <person name="Hinkle G."/>
            <person name="Gattung S."/>
            <person name="Miller N."/>
            <person name="Blanchard M."/>
            <person name="Qurollo B."/>
            <person name="Goldman B.S."/>
            <person name="Cao Y."/>
            <person name="Askenazi M."/>
            <person name="Halling C."/>
            <person name="Mullin L."/>
            <person name="Houmiel K."/>
            <person name="Gordon J."/>
            <person name="Vaudin M."/>
            <person name="Iartchouk O."/>
            <person name="Epp A."/>
            <person name="Liu F."/>
            <person name="Wollam C."/>
            <person name="Allinger M."/>
            <person name="Doughty D."/>
            <person name="Scott C."/>
            <person name="Lappas C."/>
            <person name="Markelz B."/>
            <person name="Flanagan C."/>
            <person name="Crowell C."/>
            <person name="Gurson J."/>
            <person name="Lomo C."/>
            <person name="Sear C."/>
            <person name="Strub G."/>
            <person name="Cielo C."/>
            <person name="Slater S."/>
        </authorList>
    </citation>
    <scope>NUCLEOTIDE SEQUENCE [LARGE SCALE GENOMIC DNA]</scope>
    <source>
        <strain>C58 / ATCC 33970</strain>
    </source>
</reference>
<name>ARLY2_AGRFC</name>
<feature type="chain" id="PRO_0000137731" description="Argininosuccinate lyase 2">
    <location>
        <begin position="1"/>
        <end position="504"/>
    </location>
</feature>
<organism>
    <name type="scientific">Agrobacterium fabrum (strain C58 / ATCC 33970)</name>
    <name type="common">Agrobacterium tumefaciens (strain C58)</name>
    <dbReference type="NCBI Taxonomy" id="176299"/>
    <lineage>
        <taxon>Bacteria</taxon>
        <taxon>Pseudomonadati</taxon>
        <taxon>Pseudomonadota</taxon>
        <taxon>Alphaproteobacteria</taxon>
        <taxon>Hyphomicrobiales</taxon>
        <taxon>Rhizobiaceae</taxon>
        <taxon>Rhizobium/Agrobacterium group</taxon>
        <taxon>Agrobacterium</taxon>
        <taxon>Agrobacterium tumefaciens complex</taxon>
    </lineage>
</organism>
<comment type="catalytic activity">
    <reaction evidence="1">
        <text>2-(N(omega)-L-arginino)succinate = fumarate + L-arginine</text>
        <dbReference type="Rhea" id="RHEA:24020"/>
        <dbReference type="ChEBI" id="CHEBI:29806"/>
        <dbReference type="ChEBI" id="CHEBI:32682"/>
        <dbReference type="ChEBI" id="CHEBI:57472"/>
        <dbReference type="EC" id="4.3.2.1"/>
    </reaction>
</comment>
<comment type="pathway">
    <text evidence="1">Amino-acid biosynthesis; L-arginine biosynthesis; L-arginine from L-ornithine and carbamoyl phosphate: step 3/3.</text>
</comment>
<comment type="subcellular location">
    <subcellularLocation>
        <location evidence="1">Cytoplasm</location>
    </subcellularLocation>
</comment>
<comment type="similarity">
    <text evidence="1">Belongs to the lyase 1 family. Argininosuccinate lyase subfamily.</text>
</comment>
<comment type="sequence caution" evidence="2">
    <conflict type="erroneous initiation">
        <sequence resource="EMBL-CDS" id="AAK88796"/>
    </conflict>
</comment>
<accession>Q8U705</accession>
<protein>
    <recommendedName>
        <fullName evidence="1">Argininosuccinate lyase 2</fullName>
        <shortName evidence="1">ASAL 2</shortName>
        <ecNumber evidence="1">4.3.2.1</ecNumber>
    </recommendedName>
    <alternativeName>
        <fullName evidence="1">Arginosuccinase</fullName>
    </alternativeName>
</protein>
<evidence type="ECO:0000255" key="1">
    <source>
        <dbReference type="HAMAP-Rule" id="MF_00006"/>
    </source>
</evidence>
<evidence type="ECO:0000305" key="2"/>
<sequence>MADINPRQSDTSKFPDPVYKETVLRPLFDGAKNHHVDGFRRIDRAHLVMLRETGILDAETAAKIAGALEDIDRTIEPSELVYTGEVEDFFFLIEKELKARIGVDVAGRLHTARSRNDIDHTLFKIGLKDKIDTLTAKARVLLKALIDAAERNQSTLIVAYTHGQPAQPTTFGHYLSAAIEVLIRDIERFTEARHIVDLSPMGAAAITTSGFPIDRARVAELLGFAAPLRNSYSCIAAVDYTTATYGAIELMFLHLGRLIQDFQFWTSFEVGQIYVPNSLVQISSIMPQKRNPVPIEHLRHLASQTFGRARTMLDVMHNTPFTDMNDSEGETQSMGYEAFASAGRVLDLLASLVGQISIDPERVDQNIRRSCITITELADSLVRIEDLSFRQAHEIAATVAKSVVALKGDLPNDGYQPFLGAFSGLTGRETGIDEEKFRQIVSPEHFVAVRSRFGGPAPEPMREAFAAYRGKLGAFEAEAQRSTNHEAAKAAELAEKFTALTGAR</sequence>
<gene>
    <name evidence="1" type="primary">argH2</name>
    <name type="ordered locus">Atu4651</name>
    <name type="ORF">AGR_L_463</name>
</gene>